<dbReference type="EMBL" id="DQ989011">
    <property type="protein sequence ID" value="ABK97612.1"/>
    <property type="molecule type" value="mRNA"/>
</dbReference>
<dbReference type="EMBL" id="AAAB01008980">
    <property type="protein sequence ID" value="EAA13882.2"/>
    <property type="molecule type" value="Genomic_DNA"/>
</dbReference>
<dbReference type="RefSeq" id="XP_319142.1">
    <property type="nucleotide sequence ID" value="XM_319142.3"/>
</dbReference>
<dbReference type="SMR" id="Q7PMG3"/>
<dbReference type="FunCoup" id="Q7PMG3">
    <property type="interactions" value="12"/>
</dbReference>
<dbReference type="STRING" id="7165.Q7PMG3"/>
<dbReference type="GlyCosmos" id="Q7PMG3">
    <property type="glycosylation" value="1 site, No reported glycans"/>
</dbReference>
<dbReference type="PaxDb" id="7165-AGAP009999-PA"/>
<dbReference type="EnsemblMetazoa" id="AGAP009999-RA">
    <property type="protein sequence ID" value="AGAP009999-PA"/>
    <property type="gene ID" value="AGAP009999"/>
</dbReference>
<dbReference type="GeneID" id="1279425"/>
<dbReference type="KEGG" id="aga:1279425"/>
<dbReference type="CTD" id="33251"/>
<dbReference type="VEuPathDB" id="VectorBase:AGAMI1_008088"/>
<dbReference type="VEuPathDB" id="VectorBase:AGAP009999"/>
<dbReference type="eggNOG" id="ENOG502R7M7">
    <property type="taxonomic scope" value="Eukaryota"/>
</dbReference>
<dbReference type="HOGENOM" id="CLU_049090_0_0_1"/>
<dbReference type="InParanoid" id="Q7PMG3"/>
<dbReference type="OMA" id="IVFYCMS"/>
<dbReference type="PhylomeDB" id="Q7PMG3"/>
<dbReference type="Proteomes" id="UP000007062">
    <property type="component" value="Chromosome 3R"/>
</dbReference>
<dbReference type="GO" id="GO:0030424">
    <property type="term" value="C:axon"/>
    <property type="evidence" value="ECO:0000318"/>
    <property type="project" value="GO_Central"/>
</dbReference>
<dbReference type="GO" id="GO:0030425">
    <property type="term" value="C:dendrite"/>
    <property type="evidence" value="ECO:0000318"/>
    <property type="project" value="GO_Central"/>
</dbReference>
<dbReference type="GO" id="GO:0016020">
    <property type="term" value="C:membrane"/>
    <property type="evidence" value="ECO:0000305"/>
    <property type="project" value="UniProtKB"/>
</dbReference>
<dbReference type="GO" id="GO:0043025">
    <property type="term" value="C:neuronal cell body"/>
    <property type="evidence" value="ECO:0000318"/>
    <property type="project" value="GO_Central"/>
</dbReference>
<dbReference type="GO" id="GO:0005886">
    <property type="term" value="C:plasma membrane"/>
    <property type="evidence" value="ECO:0007669"/>
    <property type="project" value="UniProtKB-SubCell"/>
</dbReference>
<dbReference type="GO" id="GO:0004984">
    <property type="term" value="F:olfactory receptor activity"/>
    <property type="evidence" value="ECO:0000315"/>
    <property type="project" value="UniProtKB"/>
</dbReference>
<dbReference type="GO" id="GO:0008527">
    <property type="term" value="F:taste receptor activity"/>
    <property type="evidence" value="ECO:0000315"/>
    <property type="project" value="UniProtKB"/>
</dbReference>
<dbReference type="GO" id="GO:0010037">
    <property type="term" value="P:response to carbon dioxide"/>
    <property type="evidence" value="ECO:0000315"/>
    <property type="project" value="UniProtKB"/>
</dbReference>
<dbReference type="GO" id="GO:0007608">
    <property type="term" value="P:sensory perception of smell"/>
    <property type="evidence" value="ECO:0000315"/>
    <property type="project" value="UniProtKB"/>
</dbReference>
<dbReference type="GO" id="GO:0050909">
    <property type="term" value="P:sensory perception of taste"/>
    <property type="evidence" value="ECO:0000315"/>
    <property type="project" value="UniProtKB"/>
</dbReference>
<dbReference type="GO" id="GO:0007165">
    <property type="term" value="P:signal transduction"/>
    <property type="evidence" value="ECO:0007669"/>
    <property type="project" value="UniProtKB-KW"/>
</dbReference>
<dbReference type="InterPro" id="IPR013604">
    <property type="entry name" value="7TM_chemorcpt"/>
</dbReference>
<dbReference type="PANTHER" id="PTHR21143:SF121">
    <property type="entry name" value="GUSTATORY AND ODORANT RECEPTOR 21A"/>
    <property type="match status" value="1"/>
</dbReference>
<dbReference type="PANTHER" id="PTHR21143">
    <property type="entry name" value="INVERTEBRATE GUSTATORY RECEPTOR"/>
    <property type="match status" value="1"/>
</dbReference>
<dbReference type="Pfam" id="PF08395">
    <property type="entry name" value="7tm_7"/>
    <property type="match status" value="1"/>
</dbReference>
<gene>
    <name evidence="5" type="primary">GPRgr22</name>
    <name type="ORF">AGAP009999</name>
</gene>
<organism>
    <name type="scientific">Anopheles gambiae</name>
    <name type="common">African malaria mosquito</name>
    <dbReference type="NCBI Taxonomy" id="7165"/>
    <lineage>
        <taxon>Eukaryota</taxon>
        <taxon>Metazoa</taxon>
        <taxon>Ecdysozoa</taxon>
        <taxon>Arthropoda</taxon>
        <taxon>Hexapoda</taxon>
        <taxon>Insecta</taxon>
        <taxon>Pterygota</taxon>
        <taxon>Neoptera</taxon>
        <taxon>Endopterygota</taxon>
        <taxon>Diptera</taxon>
        <taxon>Nematocera</taxon>
        <taxon>Culicoidea</taxon>
        <taxon>Culicidae</taxon>
        <taxon>Anophelinae</taxon>
        <taxon>Anopheles</taxon>
    </lineage>
</organism>
<feature type="chain" id="PRO_0000296317" description="Gustatory and odorant receptor 22">
    <location>
        <begin position="1"/>
        <end position="467"/>
    </location>
</feature>
<feature type="topological domain" description="Cytoplasmic" evidence="1">
    <location>
        <begin position="1"/>
        <end position="106"/>
    </location>
</feature>
<feature type="transmembrane region" description="Helical; Name=1" evidence="2">
    <location>
        <begin position="107"/>
        <end position="127"/>
    </location>
</feature>
<feature type="topological domain" description="Extracellular" evidence="1">
    <location>
        <begin position="128"/>
        <end position="144"/>
    </location>
</feature>
<feature type="transmembrane region" description="Helical; Name=2" evidence="2">
    <location>
        <begin position="145"/>
        <end position="165"/>
    </location>
</feature>
<feature type="topological domain" description="Cytoplasmic" evidence="1">
    <location>
        <begin position="166"/>
        <end position="198"/>
    </location>
</feature>
<feature type="transmembrane region" description="Helical; Name=3" evidence="2">
    <location>
        <begin position="199"/>
        <end position="219"/>
    </location>
</feature>
<feature type="topological domain" description="Extracellular" evidence="1">
    <location>
        <begin position="220"/>
        <end position="238"/>
    </location>
</feature>
<feature type="transmembrane region" description="Helical; Name=4" evidence="2">
    <location>
        <begin position="239"/>
        <end position="259"/>
    </location>
</feature>
<feature type="topological domain" description="Cytoplasmic" evidence="1">
    <location>
        <begin position="260"/>
        <end position="304"/>
    </location>
</feature>
<feature type="transmembrane region" description="Helical; Name=5" evidence="2">
    <location>
        <begin position="305"/>
        <end position="325"/>
    </location>
</feature>
<feature type="topological domain" description="Extracellular" evidence="1">
    <location>
        <begin position="326"/>
        <end position="337"/>
    </location>
</feature>
<feature type="transmembrane region" description="Helical; Name=6" evidence="2">
    <location>
        <begin position="338"/>
        <end position="358"/>
    </location>
</feature>
<feature type="topological domain" description="Cytoplasmic" evidence="1">
    <location>
        <begin position="359"/>
        <end position="414"/>
    </location>
</feature>
<feature type="transmembrane region" description="Helical; Name=7" evidence="2">
    <location>
        <begin position="415"/>
        <end position="435"/>
    </location>
</feature>
<feature type="topological domain" description="Extracellular" evidence="1">
    <location>
        <begin position="436"/>
        <end position="467"/>
    </location>
</feature>
<feature type="glycosylation site" description="N-linked (GlcNAc...) asparagine" evidence="2">
    <location>
        <position position="453"/>
    </location>
</feature>
<keyword id="KW-0085">Behavior</keyword>
<keyword id="KW-1003">Cell membrane</keyword>
<keyword id="KW-0325">Glycoprotein</keyword>
<keyword id="KW-0472">Membrane</keyword>
<keyword id="KW-0552">Olfaction</keyword>
<keyword id="KW-0675">Receptor</keyword>
<keyword id="KW-1185">Reference proteome</keyword>
<keyword id="KW-0716">Sensory transduction</keyword>
<keyword id="KW-0807">Transducer</keyword>
<keyword id="KW-0812">Transmembrane</keyword>
<keyword id="KW-1133">Transmembrane helix</keyword>
<evidence type="ECO:0000250" key="1"/>
<evidence type="ECO:0000255" key="2"/>
<evidence type="ECO:0000269" key="3">
    <source>
    </source>
</evidence>
<evidence type="ECO:0000305" key="4"/>
<evidence type="ECO:0000312" key="5">
    <source>
        <dbReference type="EMBL" id="ABK97612.1"/>
    </source>
</evidence>
<evidence type="ECO:0000312" key="6">
    <source>
        <dbReference type="EMBL" id="EAA13882.2"/>
    </source>
</evidence>
<accession>Q7PMG3</accession>
<accession>A1C3K7</accession>
<name>GR22_ANOGA</name>
<sequence>MIHTQMEDAQYEIRHQVLNPNQRQQLEDRRRIKEQLHQLEQDNESPTHMYRRKLKIASDVNLLDQHDSFYHTTKSLLVLFQIMGVMPIMRSPKGVDMPRTTFTWCSKAFLWAYFIYACETVIVLVVARERINKFISTSDKRFDEVIYNIIFMSIMVPHFLLPVASWRNGSEVAKFKNMWTDFQYKYLIVTGKPIVFPKLYPITWTLCIVSWSLSLVIILSQYYLQPDFQFCHTFAYYHIIAMLNGFCSLWFVNCTAFGTASKAFAKELTDVLATERPAAKLTEYRHLWVDLSHMMQQLGKAYSNMYGIYCLVIFFTTIIATYGSLSEIIEHGATYKEVGLFVIVFYCMSLLFIICNEAHHASKRVGLNFQERLLNVNLTAVDKATQKEVEMFLVAIDKNPPTMNLDGYANINRGLITSNISFMATYLVVLMQFKLTLLRQSAKNAFISALKANLSRIRSLDADKVNT</sequence>
<protein>
    <recommendedName>
        <fullName>Gustatory and odorant receptor 22</fullName>
    </recommendedName>
</protein>
<reference evidence="4 5" key="1">
    <citation type="journal article" date="2007" name="Nature">
        <title>Two chemosensory receptors together mediate carbon dioxide detection in Drosophila.</title>
        <authorList>
            <person name="Jones W.D."/>
            <person name="Cayirlioglu P."/>
            <person name="Grunwald Kadow I."/>
            <person name="Vosshall L.B."/>
        </authorList>
    </citation>
    <scope>NUCLEOTIDE SEQUENCE [MRNA]</scope>
    <scope>FUNCTION</scope>
    <scope>TISSUE SPECIFICITY</scope>
    <source>
        <strain evidence="5">G3</strain>
        <tissue evidence="5">Head</tissue>
    </source>
</reference>
<reference evidence="6" key="2">
    <citation type="journal article" date="2002" name="Science">
        <title>The genome sequence of the malaria mosquito Anopheles gambiae.</title>
        <authorList>
            <person name="Holt R.A."/>
            <person name="Subramanian G.M."/>
            <person name="Halpern A."/>
            <person name="Sutton G.G."/>
            <person name="Charlab R."/>
            <person name="Nusskern D.R."/>
            <person name="Wincker P."/>
            <person name="Clark A.G."/>
            <person name="Ribeiro J.M.C."/>
            <person name="Wides R."/>
            <person name="Salzberg S.L."/>
            <person name="Loftus B.J."/>
            <person name="Yandell M.D."/>
            <person name="Majoros W.H."/>
            <person name="Rusch D.B."/>
            <person name="Lai Z."/>
            <person name="Kraft C.L."/>
            <person name="Abril J.F."/>
            <person name="Anthouard V."/>
            <person name="Arensburger P."/>
            <person name="Atkinson P.W."/>
            <person name="Baden H."/>
            <person name="de Berardinis V."/>
            <person name="Baldwin D."/>
            <person name="Benes V."/>
            <person name="Biedler J."/>
            <person name="Blass C."/>
            <person name="Bolanos R."/>
            <person name="Boscus D."/>
            <person name="Barnstead M."/>
            <person name="Cai S."/>
            <person name="Center A."/>
            <person name="Chaturverdi K."/>
            <person name="Christophides G.K."/>
            <person name="Chrystal M.A.M."/>
            <person name="Clamp M."/>
            <person name="Cravchik A."/>
            <person name="Curwen V."/>
            <person name="Dana A."/>
            <person name="Delcher A."/>
            <person name="Dew I."/>
            <person name="Evans C.A."/>
            <person name="Flanigan M."/>
            <person name="Grundschober-Freimoser A."/>
            <person name="Friedli L."/>
            <person name="Gu Z."/>
            <person name="Guan P."/>
            <person name="Guigo R."/>
            <person name="Hillenmeyer M.E."/>
            <person name="Hladun S.L."/>
            <person name="Hogan J.R."/>
            <person name="Hong Y.S."/>
            <person name="Hoover J."/>
            <person name="Jaillon O."/>
            <person name="Ke Z."/>
            <person name="Kodira C.D."/>
            <person name="Kokoza E."/>
            <person name="Koutsos A."/>
            <person name="Letunic I."/>
            <person name="Levitsky A.A."/>
            <person name="Liang Y."/>
            <person name="Lin J.-J."/>
            <person name="Lobo N.F."/>
            <person name="Lopez J.R."/>
            <person name="Malek J.A."/>
            <person name="McIntosh T.C."/>
            <person name="Meister S."/>
            <person name="Miller J.R."/>
            <person name="Mobarry C."/>
            <person name="Mongin E."/>
            <person name="Murphy S.D."/>
            <person name="O'Brochta D.A."/>
            <person name="Pfannkoch C."/>
            <person name="Qi R."/>
            <person name="Regier M.A."/>
            <person name="Remington K."/>
            <person name="Shao H."/>
            <person name="Sharakhova M.V."/>
            <person name="Sitter C.D."/>
            <person name="Shetty J."/>
            <person name="Smith T.J."/>
            <person name="Strong R."/>
            <person name="Sun J."/>
            <person name="Thomasova D."/>
            <person name="Ton L.Q."/>
            <person name="Topalis P."/>
            <person name="Tu Z.J."/>
            <person name="Unger M.F."/>
            <person name="Walenz B."/>
            <person name="Wang A.H."/>
            <person name="Wang J."/>
            <person name="Wang M."/>
            <person name="Wang X."/>
            <person name="Woodford K.J."/>
            <person name="Wortman J.R."/>
            <person name="Wu M."/>
            <person name="Yao A."/>
            <person name="Zdobnov E.M."/>
            <person name="Zhang H."/>
            <person name="Zhao Q."/>
            <person name="Zhao S."/>
            <person name="Zhu S.C."/>
            <person name="Zhimulev I."/>
            <person name="Coluzzi M."/>
            <person name="della Torre A."/>
            <person name="Roth C.W."/>
            <person name="Louis C."/>
            <person name="Kalush F."/>
            <person name="Mural R.J."/>
            <person name="Myers E.W."/>
            <person name="Adams M.D."/>
            <person name="Smith H.O."/>
            <person name="Broder S."/>
            <person name="Gardner M.J."/>
            <person name="Fraser C.M."/>
            <person name="Birney E."/>
            <person name="Bork P."/>
            <person name="Brey P.T."/>
            <person name="Venter J.C."/>
            <person name="Weissenbach J."/>
            <person name="Kafatos F.C."/>
            <person name="Collins F.H."/>
            <person name="Hoffman S.L."/>
        </authorList>
    </citation>
    <scope>NUCLEOTIDE SEQUENCE [LARGE SCALE GENOMIC DNA]</scope>
    <source>
        <strain evidence="6">PEST</strain>
    </source>
</reference>
<proteinExistence type="evidence at transcript level"/>
<comment type="function">
    <text evidence="3">Gustatory receptor which mediates acceptance or avoidance behavior, depending on its substrates. GPRgr22 and GPRgr24 together are sufficient for olfactory carbon dioxide-chemosensation.</text>
</comment>
<comment type="subcellular location">
    <subcellularLocation>
        <location evidence="1">Cell membrane</location>
        <topology evidence="1">Multi-pass membrane protein</topology>
    </subcellularLocation>
</comment>
<comment type="tissue specificity">
    <text evidence="3">Carbon dioxide-responsive neurons coexpress GPRgr22 and GPRgr24 in the maxillary palp at both larval and adult life stages.</text>
</comment>
<comment type="similarity">
    <text evidence="4">Belongs to the insect chemoreceptor superfamily. Gustatory receptor (GR) family. Gr21a subfamily.</text>
</comment>